<proteinExistence type="inferred from homology"/>
<dbReference type="EMBL" id="CP000247">
    <property type="protein sequence ID" value="ABG70246.1"/>
    <property type="molecule type" value="Genomic_DNA"/>
</dbReference>
<dbReference type="RefSeq" id="WP_001296243.1">
    <property type="nucleotide sequence ID" value="NC_008253.1"/>
</dbReference>
<dbReference type="KEGG" id="ecp:ECP_2250"/>
<dbReference type="HOGENOM" id="CLU_211463_0_0_6"/>
<dbReference type="Proteomes" id="UP000009182">
    <property type="component" value="Chromosome"/>
</dbReference>
<evidence type="ECO:0000305" key="1"/>
<comment type="similarity">
    <text evidence="1">Belongs to the YojO family.</text>
</comment>
<gene>
    <name type="primary">yojO</name>
    <name type="ordered locus">ECP_2250</name>
</gene>
<name>YOJO_ECOL5</name>
<protein>
    <recommendedName>
        <fullName>Uncharacterized protein YojO</fullName>
    </recommendedName>
</protein>
<organism>
    <name type="scientific">Escherichia coli O6:K15:H31 (strain 536 / UPEC)</name>
    <dbReference type="NCBI Taxonomy" id="362663"/>
    <lineage>
        <taxon>Bacteria</taxon>
        <taxon>Pseudomonadati</taxon>
        <taxon>Pseudomonadota</taxon>
        <taxon>Gammaproteobacteria</taxon>
        <taxon>Enterobacterales</taxon>
        <taxon>Enterobacteriaceae</taxon>
        <taxon>Escherichia</taxon>
    </lineage>
</organism>
<accession>Q0TFN3</accession>
<feature type="chain" id="PRO_0000311794" description="Uncharacterized protein YojO">
    <location>
        <begin position="1"/>
        <end position="54"/>
    </location>
</feature>
<sequence length="54" mass="6251">MHTPIGVKPVAGSKEWREAWQKRAFAHISNGYKHIYIAINSPEIFLLVCFLIRI</sequence>
<reference key="1">
    <citation type="journal article" date="2006" name="Mol. Microbiol.">
        <title>Role of pathogenicity island-associated integrases in the genome plasticity of uropathogenic Escherichia coli strain 536.</title>
        <authorList>
            <person name="Hochhut B."/>
            <person name="Wilde C."/>
            <person name="Balling G."/>
            <person name="Middendorf B."/>
            <person name="Dobrindt U."/>
            <person name="Brzuszkiewicz E."/>
            <person name="Gottschalk G."/>
            <person name="Carniel E."/>
            <person name="Hacker J."/>
        </authorList>
    </citation>
    <scope>NUCLEOTIDE SEQUENCE [LARGE SCALE GENOMIC DNA]</scope>
    <source>
        <strain>536 / UPEC</strain>
    </source>
</reference>